<comment type="function">
    <text evidence="1">Essential component of the TIM23 complex, a complex that mediates the translocation of transit peptide-containing proteins across the mitochondrial inner membrane. Required to direct preproteins in transit and direct them to the channel protein TIM23, and possibly facilitates transfer of the translocating proteins from the TOM complex to the TIM23 complex (By similarity).</text>
</comment>
<comment type="subunit">
    <text evidence="1">Component of the TIM23 complex, at least composed of TIM23, TIM17, TIM50 and TIM21. Interacts with preproteins in transit (By similarity).</text>
</comment>
<comment type="subcellular location">
    <subcellularLocation>
        <location evidence="1">Mitochondrion inner membrane</location>
        <topology evidence="1">Single-pass membrane protein</topology>
    </subcellularLocation>
</comment>
<comment type="similarity">
    <text evidence="5">Belongs to the TIM50 family.</text>
</comment>
<accession>Q59W44</accession>
<accession>A0A1D8PF38</accession>
<dbReference type="EMBL" id="CP017623">
    <property type="protein sequence ID" value="AOW26747.1"/>
    <property type="molecule type" value="Genomic_DNA"/>
</dbReference>
<dbReference type="RefSeq" id="XP_713813.1">
    <property type="nucleotide sequence ID" value="XM_708720.1"/>
</dbReference>
<dbReference type="SMR" id="Q59W44"/>
<dbReference type="FunCoup" id="Q59W44">
    <property type="interactions" value="504"/>
</dbReference>
<dbReference type="STRING" id="237561.Q59W44"/>
<dbReference type="EnsemblFungi" id="C1_11220C_A-T">
    <property type="protein sequence ID" value="C1_11220C_A-T-p1"/>
    <property type="gene ID" value="C1_11220C_A"/>
</dbReference>
<dbReference type="GeneID" id="3644530"/>
<dbReference type="KEGG" id="cal:CAALFM_C111220CA"/>
<dbReference type="CGD" id="CAL0000183476">
    <property type="gene designation" value="TIM50"/>
</dbReference>
<dbReference type="VEuPathDB" id="FungiDB:C1_11220C_A"/>
<dbReference type="eggNOG" id="KOG2832">
    <property type="taxonomic scope" value="Eukaryota"/>
</dbReference>
<dbReference type="HOGENOM" id="CLU_023309_1_2_1"/>
<dbReference type="InParanoid" id="Q59W44"/>
<dbReference type="OrthoDB" id="287041at2759"/>
<dbReference type="PRO" id="PR:Q59W44"/>
<dbReference type="Proteomes" id="UP000000559">
    <property type="component" value="Chromosome 1"/>
</dbReference>
<dbReference type="GO" id="GO:0005886">
    <property type="term" value="C:plasma membrane"/>
    <property type="evidence" value="ECO:0000314"/>
    <property type="project" value="CGD"/>
</dbReference>
<dbReference type="GO" id="GO:0005744">
    <property type="term" value="C:TIM23 mitochondrial import inner membrane translocase complex"/>
    <property type="evidence" value="ECO:0000318"/>
    <property type="project" value="GO_Central"/>
</dbReference>
<dbReference type="GO" id="GO:0030150">
    <property type="term" value="P:protein import into mitochondrial matrix"/>
    <property type="evidence" value="ECO:0000318"/>
    <property type="project" value="GO_Central"/>
</dbReference>
<dbReference type="CDD" id="cd07521">
    <property type="entry name" value="HAD_FCP1-like"/>
    <property type="match status" value="1"/>
</dbReference>
<dbReference type="FunFam" id="3.40.50.1000:FF:000019">
    <property type="entry name" value="Mitochondrial import inner membrane translocase subunit TIM50"/>
    <property type="match status" value="1"/>
</dbReference>
<dbReference type="Gene3D" id="3.40.50.1000">
    <property type="entry name" value="HAD superfamily/HAD-like"/>
    <property type="match status" value="1"/>
</dbReference>
<dbReference type="InterPro" id="IPR004274">
    <property type="entry name" value="FCP1_dom"/>
</dbReference>
<dbReference type="InterPro" id="IPR036412">
    <property type="entry name" value="HAD-like_sf"/>
</dbReference>
<dbReference type="InterPro" id="IPR023214">
    <property type="entry name" value="HAD_sf"/>
</dbReference>
<dbReference type="InterPro" id="IPR050365">
    <property type="entry name" value="TIM50"/>
</dbReference>
<dbReference type="PANTHER" id="PTHR12210">
    <property type="entry name" value="DULLARD PROTEIN PHOSPHATASE"/>
    <property type="match status" value="1"/>
</dbReference>
<dbReference type="Pfam" id="PF03031">
    <property type="entry name" value="NIF"/>
    <property type="match status" value="1"/>
</dbReference>
<dbReference type="SMART" id="SM00577">
    <property type="entry name" value="CPDc"/>
    <property type="match status" value="1"/>
</dbReference>
<dbReference type="SUPFAM" id="SSF56784">
    <property type="entry name" value="HAD-like"/>
    <property type="match status" value="1"/>
</dbReference>
<dbReference type="PROSITE" id="PS50969">
    <property type="entry name" value="FCP1"/>
    <property type="match status" value="1"/>
</dbReference>
<reference key="1">
    <citation type="journal article" date="2004" name="Proc. Natl. Acad. Sci. U.S.A.">
        <title>The diploid genome sequence of Candida albicans.</title>
        <authorList>
            <person name="Jones T."/>
            <person name="Federspiel N.A."/>
            <person name="Chibana H."/>
            <person name="Dungan J."/>
            <person name="Kalman S."/>
            <person name="Magee B.B."/>
            <person name="Newport G."/>
            <person name="Thorstenson Y.R."/>
            <person name="Agabian N."/>
            <person name="Magee P.T."/>
            <person name="Davis R.W."/>
            <person name="Scherer S."/>
        </authorList>
    </citation>
    <scope>NUCLEOTIDE SEQUENCE [LARGE SCALE GENOMIC DNA]</scope>
    <source>
        <strain>SC5314 / ATCC MYA-2876</strain>
    </source>
</reference>
<reference key="2">
    <citation type="journal article" date="2007" name="Genome Biol.">
        <title>Assembly of the Candida albicans genome into sixteen supercontigs aligned on the eight chromosomes.</title>
        <authorList>
            <person name="van het Hoog M."/>
            <person name="Rast T.J."/>
            <person name="Martchenko M."/>
            <person name="Grindle S."/>
            <person name="Dignard D."/>
            <person name="Hogues H."/>
            <person name="Cuomo C."/>
            <person name="Berriman M."/>
            <person name="Scherer S."/>
            <person name="Magee B.B."/>
            <person name="Whiteway M."/>
            <person name="Chibana H."/>
            <person name="Nantel A."/>
            <person name="Magee P.T."/>
        </authorList>
    </citation>
    <scope>GENOME REANNOTATION</scope>
    <source>
        <strain>SC5314 / ATCC MYA-2876</strain>
    </source>
</reference>
<reference key="3">
    <citation type="journal article" date="2013" name="Genome Biol.">
        <title>Assembly of a phased diploid Candida albicans genome facilitates allele-specific measurements and provides a simple model for repeat and indel structure.</title>
        <authorList>
            <person name="Muzzey D."/>
            <person name="Schwartz K."/>
            <person name="Weissman J.S."/>
            <person name="Sherlock G."/>
        </authorList>
    </citation>
    <scope>NUCLEOTIDE SEQUENCE [LARGE SCALE GENOMIC DNA]</scope>
    <scope>GENOME REANNOTATION</scope>
    <source>
        <strain>SC5314 / ATCC MYA-2876</strain>
    </source>
</reference>
<organism>
    <name type="scientific">Candida albicans (strain SC5314 / ATCC MYA-2876)</name>
    <name type="common">Yeast</name>
    <dbReference type="NCBI Taxonomy" id="237561"/>
    <lineage>
        <taxon>Eukaryota</taxon>
        <taxon>Fungi</taxon>
        <taxon>Dikarya</taxon>
        <taxon>Ascomycota</taxon>
        <taxon>Saccharomycotina</taxon>
        <taxon>Pichiomycetes</taxon>
        <taxon>Debaryomycetaceae</taxon>
        <taxon>Candida/Lodderomyces clade</taxon>
        <taxon>Candida</taxon>
    </lineage>
</organism>
<proteinExistence type="inferred from homology"/>
<evidence type="ECO:0000250" key="1"/>
<evidence type="ECO:0000255" key="2"/>
<evidence type="ECO:0000255" key="3">
    <source>
        <dbReference type="PROSITE-ProRule" id="PRU00336"/>
    </source>
</evidence>
<evidence type="ECO:0000256" key="4">
    <source>
        <dbReference type="SAM" id="MobiDB-lite"/>
    </source>
</evidence>
<evidence type="ECO:0000305" key="5"/>
<feature type="transit peptide" description="Mitochondrion" evidence="2">
    <location>
        <begin position="1"/>
        <end position="16"/>
    </location>
</feature>
<feature type="chain" id="PRO_0000043127" description="Mitochondrial import inner membrane translocase subunit TIM50">
    <location>
        <begin position="17"/>
        <end position="469"/>
    </location>
</feature>
<feature type="topological domain" description="Mitochondrial matrix" evidence="2">
    <location>
        <begin position="17"/>
        <end position="108"/>
    </location>
</feature>
<feature type="transmembrane region" description="Helical" evidence="2">
    <location>
        <begin position="109"/>
        <end position="125"/>
    </location>
</feature>
<feature type="topological domain" description="Mitochondrial intermembrane" evidence="2">
    <location>
        <begin position="126"/>
        <end position="469"/>
    </location>
</feature>
<feature type="domain" description="FCP1 homology" evidence="3">
    <location>
        <begin position="183"/>
        <end position="326"/>
    </location>
</feature>
<feature type="region of interest" description="Disordered" evidence="4">
    <location>
        <begin position="70"/>
        <end position="99"/>
    </location>
</feature>
<sequence>MFRTQSRYLVRSILANHCVLPSTRMAVSPILNQSIKFYSSKDNATDKSQEKEQPKSILNDDMLARAGFEDVDPKEETSNSEEQATKQTGRKRKRAQTSKDLQRERYANMFYLSALIFGVAGVGYMSRDWDSEKEQEEMDGKNVENGYTPKLMYERLSKRLGSLFTFFSEPAFENLLPPPPPEQYRRPLTLVVTLDDFLIHSNWDTQHGWRTGKRPGLDYFLGYLSQYYEIVVFSSNSQIYSDKTVNKLDPYHAYISYALFREACRYKDGKLIKDLSLLNRDLGKTVMIDVDEDSAALQPENSIIVKKWEGQPDEYLISLIPFLEYLATQPVKDVRPILNSYKDKSNIVAEFAERENKLREQWRKDHGGNNGKPNAGNFIAKLLGIPVPEPKMPLDIIREHGQLQYEHFQKYLQENAHKFLEEEQKLKDEFGKVTLNKLITEGAPNAEEIAKVQQQRALEEAQKQQEGHK</sequence>
<name>TIM50_CANAL</name>
<protein>
    <recommendedName>
        <fullName>Mitochondrial import inner membrane translocase subunit TIM50</fullName>
    </recommendedName>
</protein>
<keyword id="KW-0472">Membrane</keyword>
<keyword id="KW-0496">Mitochondrion</keyword>
<keyword id="KW-0999">Mitochondrion inner membrane</keyword>
<keyword id="KW-0653">Protein transport</keyword>
<keyword id="KW-1185">Reference proteome</keyword>
<keyword id="KW-0809">Transit peptide</keyword>
<keyword id="KW-0811">Translocation</keyword>
<keyword id="KW-0812">Transmembrane</keyword>
<keyword id="KW-1133">Transmembrane helix</keyword>
<keyword id="KW-0813">Transport</keyword>
<gene>
    <name type="primary">TIM50</name>
    <name type="ordered locus">CAALFM_C111220CA</name>
    <name type="ORF">CaO19.680</name>
    <name type="ORF">CaO19.8297</name>
</gene>